<organism>
    <name type="scientific">Pseudomonas entomophila (strain L48)</name>
    <dbReference type="NCBI Taxonomy" id="384676"/>
    <lineage>
        <taxon>Bacteria</taxon>
        <taxon>Pseudomonadati</taxon>
        <taxon>Pseudomonadota</taxon>
        <taxon>Gammaproteobacteria</taxon>
        <taxon>Pseudomonadales</taxon>
        <taxon>Pseudomonadaceae</taxon>
        <taxon>Pseudomonas</taxon>
    </lineage>
</organism>
<protein>
    <recommendedName>
        <fullName evidence="1">UPF0260 protein PSEEN4031</fullName>
    </recommendedName>
</protein>
<gene>
    <name type="ordered locus">PSEEN4031</name>
</gene>
<dbReference type="EMBL" id="CT573326">
    <property type="protein sequence ID" value="CAK16729.1"/>
    <property type="molecule type" value="Genomic_DNA"/>
</dbReference>
<dbReference type="RefSeq" id="WP_011535101.1">
    <property type="nucleotide sequence ID" value="NC_008027.1"/>
</dbReference>
<dbReference type="STRING" id="384676.PSEEN4031"/>
<dbReference type="GeneID" id="32807048"/>
<dbReference type="KEGG" id="pen:PSEEN4031"/>
<dbReference type="eggNOG" id="COG2983">
    <property type="taxonomic scope" value="Bacteria"/>
</dbReference>
<dbReference type="HOGENOM" id="CLU_109769_0_1_6"/>
<dbReference type="OrthoDB" id="9786855at2"/>
<dbReference type="Proteomes" id="UP000000658">
    <property type="component" value="Chromosome"/>
</dbReference>
<dbReference type="HAMAP" id="MF_00676">
    <property type="entry name" value="UPF0260"/>
    <property type="match status" value="1"/>
</dbReference>
<dbReference type="InterPro" id="IPR005358">
    <property type="entry name" value="Puta_zinc/iron-chelating_dom"/>
</dbReference>
<dbReference type="InterPro" id="IPR008228">
    <property type="entry name" value="UCP006173"/>
</dbReference>
<dbReference type="NCBIfam" id="NF003501">
    <property type="entry name" value="PRK05170.1-5"/>
    <property type="match status" value="1"/>
</dbReference>
<dbReference type="NCBIfam" id="NF003502">
    <property type="entry name" value="PRK05170.1-6"/>
    <property type="match status" value="1"/>
</dbReference>
<dbReference type="NCBIfam" id="NF003507">
    <property type="entry name" value="PRK05170.2-5"/>
    <property type="match status" value="1"/>
</dbReference>
<dbReference type="PANTHER" id="PTHR37421">
    <property type="entry name" value="UPF0260 PROTEIN YCGN"/>
    <property type="match status" value="1"/>
</dbReference>
<dbReference type="PANTHER" id="PTHR37421:SF1">
    <property type="entry name" value="UPF0260 PROTEIN YCGN"/>
    <property type="match status" value="1"/>
</dbReference>
<dbReference type="Pfam" id="PF03692">
    <property type="entry name" value="CxxCxxCC"/>
    <property type="match status" value="1"/>
</dbReference>
<dbReference type="PIRSF" id="PIRSF006173">
    <property type="entry name" value="UCP006173"/>
    <property type="match status" value="1"/>
</dbReference>
<feature type="chain" id="PRO_1000061959" description="UPF0260 protein PSEEN4031">
    <location>
        <begin position="1"/>
        <end position="149"/>
    </location>
</feature>
<reference key="1">
    <citation type="journal article" date="2006" name="Nat. Biotechnol.">
        <title>Complete genome sequence of the entomopathogenic and metabolically versatile soil bacterium Pseudomonas entomophila.</title>
        <authorList>
            <person name="Vodovar N."/>
            <person name="Vallenet D."/>
            <person name="Cruveiller S."/>
            <person name="Rouy Z."/>
            <person name="Barbe V."/>
            <person name="Acosta C."/>
            <person name="Cattolico L."/>
            <person name="Jubin C."/>
            <person name="Lajus A."/>
            <person name="Segurens B."/>
            <person name="Vacherie B."/>
            <person name="Wincker P."/>
            <person name="Weissenbach J."/>
            <person name="Lemaitre B."/>
            <person name="Medigue C."/>
            <person name="Boccard F."/>
        </authorList>
    </citation>
    <scope>NUCLEOTIDE SEQUENCE [LARGE SCALE GENOMIC DNA]</scope>
    <source>
        <strain>L48</strain>
    </source>
</reference>
<sequence length="149" mass="17226">MNADTAPFWRRKTLDQLDSKEWESLCDGCGLCCLQKLEDEEDNSVYYTSIACKLLDLQTCQCSDYPNRFKHVPDCIQLTPGKADQFKWLPPTCGYRLVSEGQDLPAWHHLVSGDRTQVHEQRISRSGRMLSENDVDEDDWEDHLIFRAG</sequence>
<evidence type="ECO:0000255" key="1">
    <source>
        <dbReference type="HAMAP-Rule" id="MF_00676"/>
    </source>
</evidence>
<comment type="similarity">
    <text evidence="1">Belongs to the UPF0260 family.</text>
</comment>
<proteinExistence type="inferred from homology"/>
<name>Y4031_PSEE4</name>
<accession>Q1I6K6</accession>